<accession>Q0HE99</accession>
<gene>
    <name evidence="1" type="primary">ubiB</name>
    <name type="ordered locus">Shewmr4_3553</name>
</gene>
<sequence>MTLASIRRGYHVIKTLLQYGLDDVLPPKMTPWYFKLARNSLFWIRNKHKGKSGGERLKLAMQELGPVYIKLGQMLSTRRDLLSDEWANELAMLQDKVPPFDGALARQAIETELKAPIESFFDDFNETPLASASISQVHTATLKSNGKAVVLKVLRPNVEAKIQADLLLMSQTAKIIDYLLGEGNRLRPSEVIEDYRVTILGELNLKLEALNAIKLRNNFLDSDALYIPYVYEEFCYPRLMVMERIYGIPVSDIAALKAQGTNFKLLAERGVELFFTQVFRDNFFHADMHPGNIFISRDHPENPYYIGLDCGIMGTLSEVDKRYLAENFLAFFNRDYHRIAQLYIESGWVSEKTDLQAFEQAIKVVCEPMFNKPLDEISFGHVLLELFRTARHFDIVVQPQLVLLEKTLLYIEGLGRQLYPQLDLWQTAKPFLEQWMAEQVGPKAMFKKVSTKLPYWSDKLPEFPELIYDNLKLGRKLLSSQQQMLDKYLKYQQQAHKSNYLLITSAILLICGTLLFNQDATLWSPYVCLISGAALWIIGWRSRPKNRKF</sequence>
<feature type="chain" id="PRO_1000050061" description="Probable protein kinase UbiB">
    <location>
        <begin position="1"/>
        <end position="549"/>
    </location>
</feature>
<feature type="transmembrane region" description="Helical" evidence="1">
    <location>
        <begin position="498"/>
        <end position="518"/>
    </location>
</feature>
<feature type="transmembrane region" description="Helical" evidence="1">
    <location>
        <begin position="520"/>
        <end position="540"/>
    </location>
</feature>
<feature type="domain" description="Protein kinase" evidence="1">
    <location>
        <begin position="123"/>
        <end position="501"/>
    </location>
</feature>
<feature type="active site" description="Proton acceptor" evidence="1">
    <location>
        <position position="287"/>
    </location>
</feature>
<feature type="binding site" evidence="1">
    <location>
        <begin position="129"/>
        <end position="137"/>
    </location>
    <ligand>
        <name>ATP</name>
        <dbReference type="ChEBI" id="CHEBI:30616"/>
    </ligand>
</feature>
<feature type="binding site" evidence="1">
    <location>
        <position position="152"/>
    </location>
    <ligand>
        <name>ATP</name>
        <dbReference type="ChEBI" id="CHEBI:30616"/>
    </ligand>
</feature>
<dbReference type="EC" id="2.7.-.-" evidence="1"/>
<dbReference type="EMBL" id="CP000446">
    <property type="protein sequence ID" value="ABI40618.1"/>
    <property type="molecule type" value="Genomic_DNA"/>
</dbReference>
<dbReference type="RefSeq" id="WP_011624282.1">
    <property type="nucleotide sequence ID" value="NC_008321.1"/>
</dbReference>
<dbReference type="SMR" id="Q0HE99"/>
<dbReference type="KEGG" id="she:Shewmr4_3553"/>
<dbReference type="HOGENOM" id="CLU_006533_0_0_6"/>
<dbReference type="UniPathway" id="UPA00232"/>
<dbReference type="GO" id="GO:0005886">
    <property type="term" value="C:plasma membrane"/>
    <property type="evidence" value="ECO:0007669"/>
    <property type="project" value="UniProtKB-SubCell"/>
</dbReference>
<dbReference type="GO" id="GO:0005524">
    <property type="term" value="F:ATP binding"/>
    <property type="evidence" value="ECO:0007669"/>
    <property type="project" value="UniProtKB-KW"/>
</dbReference>
<dbReference type="GO" id="GO:0004672">
    <property type="term" value="F:protein kinase activity"/>
    <property type="evidence" value="ECO:0007669"/>
    <property type="project" value="UniProtKB-UniRule"/>
</dbReference>
<dbReference type="GO" id="GO:0010795">
    <property type="term" value="P:regulation of ubiquinone biosynthetic process"/>
    <property type="evidence" value="ECO:0007669"/>
    <property type="project" value="UniProtKB-UniRule"/>
</dbReference>
<dbReference type="GO" id="GO:0006744">
    <property type="term" value="P:ubiquinone biosynthetic process"/>
    <property type="evidence" value="ECO:0007669"/>
    <property type="project" value="UniProtKB-UniPathway"/>
</dbReference>
<dbReference type="CDD" id="cd13972">
    <property type="entry name" value="UbiB"/>
    <property type="match status" value="1"/>
</dbReference>
<dbReference type="HAMAP" id="MF_00414">
    <property type="entry name" value="UbiB"/>
    <property type="match status" value="1"/>
</dbReference>
<dbReference type="InterPro" id="IPR004147">
    <property type="entry name" value="ABC1_dom"/>
</dbReference>
<dbReference type="InterPro" id="IPR011009">
    <property type="entry name" value="Kinase-like_dom_sf"/>
</dbReference>
<dbReference type="InterPro" id="IPR010232">
    <property type="entry name" value="UbiB"/>
</dbReference>
<dbReference type="InterPro" id="IPR045308">
    <property type="entry name" value="UbiB_bact"/>
</dbReference>
<dbReference type="InterPro" id="IPR050154">
    <property type="entry name" value="UbiB_kinase"/>
</dbReference>
<dbReference type="NCBIfam" id="NF003404">
    <property type="entry name" value="PRK04750.1"/>
    <property type="match status" value="1"/>
</dbReference>
<dbReference type="NCBIfam" id="TIGR01982">
    <property type="entry name" value="UbiB"/>
    <property type="match status" value="1"/>
</dbReference>
<dbReference type="PANTHER" id="PTHR10566">
    <property type="entry name" value="CHAPERONE-ACTIVITY OF BC1 COMPLEX CABC1 -RELATED"/>
    <property type="match status" value="1"/>
</dbReference>
<dbReference type="PANTHER" id="PTHR10566:SF113">
    <property type="entry name" value="PROTEIN ACTIVITY OF BC1 COMPLEX KINASE 7, CHLOROPLASTIC"/>
    <property type="match status" value="1"/>
</dbReference>
<dbReference type="Pfam" id="PF03109">
    <property type="entry name" value="ABC1"/>
    <property type="match status" value="1"/>
</dbReference>
<dbReference type="SUPFAM" id="SSF56112">
    <property type="entry name" value="Protein kinase-like (PK-like)"/>
    <property type="match status" value="1"/>
</dbReference>
<evidence type="ECO:0000255" key="1">
    <source>
        <dbReference type="HAMAP-Rule" id="MF_00414"/>
    </source>
</evidence>
<keyword id="KW-0067">ATP-binding</keyword>
<keyword id="KW-0997">Cell inner membrane</keyword>
<keyword id="KW-1003">Cell membrane</keyword>
<keyword id="KW-0418">Kinase</keyword>
<keyword id="KW-0472">Membrane</keyword>
<keyword id="KW-0547">Nucleotide-binding</keyword>
<keyword id="KW-0808">Transferase</keyword>
<keyword id="KW-0812">Transmembrane</keyword>
<keyword id="KW-1133">Transmembrane helix</keyword>
<keyword id="KW-0831">Ubiquinone biosynthesis</keyword>
<reference key="1">
    <citation type="submission" date="2006-08" db="EMBL/GenBank/DDBJ databases">
        <title>Complete sequence of Shewanella sp. MR-4.</title>
        <authorList>
            <consortium name="US DOE Joint Genome Institute"/>
            <person name="Copeland A."/>
            <person name="Lucas S."/>
            <person name="Lapidus A."/>
            <person name="Barry K."/>
            <person name="Detter J.C."/>
            <person name="Glavina del Rio T."/>
            <person name="Hammon N."/>
            <person name="Israni S."/>
            <person name="Dalin E."/>
            <person name="Tice H."/>
            <person name="Pitluck S."/>
            <person name="Kiss H."/>
            <person name="Brettin T."/>
            <person name="Bruce D."/>
            <person name="Han C."/>
            <person name="Tapia R."/>
            <person name="Gilna P."/>
            <person name="Schmutz J."/>
            <person name="Larimer F."/>
            <person name="Land M."/>
            <person name="Hauser L."/>
            <person name="Kyrpides N."/>
            <person name="Mikhailova N."/>
            <person name="Nealson K."/>
            <person name="Konstantinidis K."/>
            <person name="Klappenbach J."/>
            <person name="Tiedje J."/>
            <person name="Richardson P."/>
        </authorList>
    </citation>
    <scope>NUCLEOTIDE SEQUENCE [LARGE SCALE GENOMIC DNA]</scope>
    <source>
        <strain>MR-4</strain>
    </source>
</reference>
<organism>
    <name type="scientific">Shewanella sp. (strain MR-4)</name>
    <dbReference type="NCBI Taxonomy" id="60480"/>
    <lineage>
        <taxon>Bacteria</taxon>
        <taxon>Pseudomonadati</taxon>
        <taxon>Pseudomonadota</taxon>
        <taxon>Gammaproteobacteria</taxon>
        <taxon>Alteromonadales</taxon>
        <taxon>Shewanellaceae</taxon>
        <taxon>Shewanella</taxon>
    </lineage>
</organism>
<comment type="function">
    <text evidence="1">Is probably a protein kinase regulator of UbiI activity which is involved in aerobic coenzyme Q (ubiquinone) biosynthesis.</text>
</comment>
<comment type="pathway">
    <text>Cofactor biosynthesis; ubiquinone biosynthesis [regulation].</text>
</comment>
<comment type="subcellular location">
    <subcellularLocation>
        <location evidence="1">Cell inner membrane</location>
        <topology evidence="1">Multi-pass membrane protein</topology>
    </subcellularLocation>
</comment>
<comment type="similarity">
    <text evidence="1">Belongs to the ABC1 family. UbiB subfamily.</text>
</comment>
<protein>
    <recommendedName>
        <fullName evidence="1">Probable protein kinase UbiB</fullName>
        <ecNumber evidence="1">2.7.-.-</ecNumber>
    </recommendedName>
    <alternativeName>
        <fullName evidence="1">Ubiquinone biosynthesis protein UbiB</fullName>
    </alternativeName>
</protein>
<name>UBIB_SHESM</name>
<proteinExistence type="inferred from homology"/>